<name>BIOF_ECOL6</name>
<proteinExistence type="inferred from homology"/>
<evidence type="ECO:0000255" key="1">
    <source>
        <dbReference type="HAMAP-Rule" id="MF_01693"/>
    </source>
</evidence>
<feature type="chain" id="PRO_0000380980" description="8-amino-7-oxononanoate synthase">
    <location>
        <begin position="1"/>
        <end position="384"/>
    </location>
</feature>
<feature type="binding site" evidence="1">
    <location>
        <position position="21"/>
    </location>
    <ligand>
        <name>substrate</name>
    </ligand>
</feature>
<feature type="binding site" evidence="1">
    <location>
        <begin position="108"/>
        <end position="109"/>
    </location>
    <ligand>
        <name>pyridoxal 5'-phosphate</name>
        <dbReference type="ChEBI" id="CHEBI:597326"/>
    </ligand>
</feature>
<feature type="binding site" evidence="1">
    <location>
        <position position="133"/>
    </location>
    <ligand>
        <name>substrate</name>
    </ligand>
</feature>
<feature type="binding site" evidence="1">
    <location>
        <position position="179"/>
    </location>
    <ligand>
        <name>pyridoxal 5'-phosphate</name>
        <dbReference type="ChEBI" id="CHEBI:597326"/>
    </ligand>
</feature>
<feature type="binding site" evidence="1">
    <location>
        <position position="207"/>
    </location>
    <ligand>
        <name>pyridoxal 5'-phosphate</name>
        <dbReference type="ChEBI" id="CHEBI:597326"/>
    </ligand>
</feature>
<feature type="binding site" evidence="1">
    <location>
        <position position="233"/>
    </location>
    <ligand>
        <name>pyridoxal 5'-phosphate</name>
        <dbReference type="ChEBI" id="CHEBI:597326"/>
    </ligand>
</feature>
<feature type="binding site" evidence="1">
    <location>
        <position position="352"/>
    </location>
    <ligand>
        <name>substrate</name>
    </ligand>
</feature>
<feature type="modified residue" description="N6-(pyridoxal phosphate)lysine" evidence="1">
    <location>
        <position position="236"/>
    </location>
</feature>
<protein>
    <recommendedName>
        <fullName evidence="1">8-amino-7-oxononanoate synthase</fullName>
        <shortName evidence="1">AONS</shortName>
        <ecNumber evidence="1">2.3.1.47</ecNumber>
    </recommendedName>
    <alternativeName>
        <fullName evidence="1">7-keto-8-amino-pelargonic acid synthase</fullName>
        <shortName evidence="1">7-KAP synthase</shortName>
        <shortName evidence="1">KAPA synthase</shortName>
    </alternativeName>
    <alternativeName>
        <fullName evidence="1">8-amino-7-ketopelargonate synthase</fullName>
    </alternativeName>
</protein>
<gene>
    <name evidence="1" type="primary">bioF</name>
    <name type="ordered locus">c0856</name>
</gene>
<reference key="1">
    <citation type="journal article" date="2002" name="Proc. Natl. Acad. Sci. U.S.A.">
        <title>Extensive mosaic structure revealed by the complete genome sequence of uropathogenic Escherichia coli.</title>
        <authorList>
            <person name="Welch R.A."/>
            <person name="Burland V."/>
            <person name="Plunkett G. III"/>
            <person name="Redford P."/>
            <person name="Roesch P."/>
            <person name="Rasko D."/>
            <person name="Buckles E.L."/>
            <person name="Liou S.-R."/>
            <person name="Boutin A."/>
            <person name="Hackett J."/>
            <person name="Stroud D."/>
            <person name="Mayhew G.F."/>
            <person name="Rose D.J."/>
            <person name="Zhou S."/>
            <person name="Schwartz D.C."/>
            <person name="Perna N.T."/>
            <person name="Mobley H.L.T."/>
            <person name="Donnenberg M.S."/>
            <person name="Blattner F.R."/>
        </authorList>
    </citation>
    <scope>NUCLEOTIDE SEQUENCE [LARGE SCALE GENOMIC DNA]</scope>
    <source>
        <strain>CFT073 / ATCC 700928 / UPEC</strain>
    </source>
</reference>
<organism>
    <name type="scientific">Escherichia coli O6:H1 (strain CFT073 / ATCC 700928 / UPEC)</name>
    <dbReference type="NCBI Taxonomy" id="199310"/>
    <lineage>
        <taxon>Bacteria</taxon>
        <taxon>Pseudomonadati</taxon>
        <taxon>Pseudomonadota</taxon>
        <taxon>Gammaproteobacteria</taxon>
        <taxon>Enterobacterales</taxon>
        <taxon>Enterobacteriaceae</taxon>
        <taxon>Escherichia</taxon>
    </lineage>
</organism>
<accession>Q8FJQ2</accession>
<sequence>MIWQEKIDAALDARRVADALRRRYPVAQGAGRWLVADDCQYLNFSSNDYLGLSHHPQIIRAWQQGADQFGVGSGGSGHVSGYSVAHQVLEEELAEWLGYSRALLFISGFAANQAVIAAMMAKEDRIVADRLSHASLLEAASLSPSPLRRFAHNDVTHLARLLASPCPGQQLVVTEGVFSMDGDSAPLEEIQQVTQQHDGWLMVDDAHGTGVIGEQGRGSCWLQKVKPELLVVTFGKGFGVSGAAVLCSNTVADYLLQFARHLIYSTSMPPAQAQALRASLAVIRSDEGDARREKLAALITRFRAGVQDLPFTLADSWSAIQPLIVGDNSRALQLAEKLRQQGCWVTAIRPPTVPAGTARLRLTLTAAHEMQDIDRLLEVLHGNG</sequence>
<comment type="function">
    <text evidence="1">Catalyzes the decarboxylative condensation of pimeloyl-[acyl-carrier protein] and L-alanine to produce 8-amino-7-oxononanoate (AON), [acyl-carrier protein], and carbon dioxide.</text>
</comment>
<comment type="catalytic activity">
    <reaction evidence="1">
        <text>6-carboxyhexanoyl-[ACP] + L-alanine + H(+) = (8S)-8-amino-7-oxononanoate + holo-[ACP] + CO2</text>
        <dbReference type="Rhea" id="RHEA:42288"/>
        <dbReference type="Rhea" id="RHEA-COMP:9685"/>
        <dbReference type="Rhea" id="RHEA-COMP:9955"/>
        <dbReference type="ChEBI" id="CHEBI:15378"/>
        <dbReference type="ChEBI" id="CHEBI:16526"/>
        <dbReference type="ChEBI" id="CHEBI:57972"/>
        <dbReference type="ChEBI" id="CHEBI:64479"/>
        <dbReference type="ChEBI" id="CHEBI:78846"/>
        <dbReference type="ChEBI" id="CHEBI:149468"/>
        <dbReference type="EC" id="2.3.1.47"/>
    </reaction>
</comment>
<comment type="cofactor">
    <cofactor evidence="1">
        <name>pyridoxal 5'-phosphate</name>
        <dbReference type="ChEBI" id="CHEBI:597326"/>
    </cofactor>
</comment>
<comment type="pathway">
    <text evidence="1">Cofactor biosynthesis; biotin biosynthesis.</text>
</comment>
<comment type="subunit">
    <text evidence="1">Homodimer.</text>
</comment>
<comment type="similarity">
    <text evidence="1">Belongs to the class-II pyridoxal-phosphate-dependent aminotransferase family. BioF subfamily.</text>
</comment>
<dbReference type="EC" id="2.3.1.47" evidence="1"/>
<dbReference type="EMBL" id="AE014075">
    <property type="protein sequence ID" value="AAN79329.1"/>
    <property type="molecule type" value="Genomic_DNA"/>
</dbReference>
<dbReference type="RefSeq" id="WP_000638120.1">
    <property type="nucleotide sequence ID" value="NZ_CP051263.1"/>
</dbReference>
<dbReference type="SMR" id="Q8FJQ2"/>
<dbReference type="STRING" id="199310.c0856"/>
<dbReference type="KEGG" id="ecc:c0856"/>
<dbReference type="eggNOG" id="COG0156">
    <property type="taxonomic scope" value="Bacteria"/>
</dbReference>
<dbReference type="HOGENOM" id="CLU_015846_11_2_6"/>
<dbReference type="BioCyc" id="ECOL199310:C0856-MONOMER"/>
<dbReference type="UniPathway" id="UPA00078"/>
<dbReference type="Proteomes" id="UP000001410">
    <property type="component" value="Chromosome"/>
</dbReference>
<dbReference type="GO" id="GO:0008710">
    <property type="term" value="F:8-amino-7-oxononanoate synthase activity"/>
    <property type="evidence" value="ECO:0007669"/>
    <property type="project" value="UniProtKB-UniRule"/>
</dbReference>
<dbReference type="GO" id="GO:0030170">
    <property type="term" value="F:pyridoxal phosphate binding"/>
    <property type="evidence" value="ECO:0007669"/>
    <property type="project" value="UniProtKB-UniRule"/>
</dbReference>
<dbReference type="GO" id="GO:0009102">
    <property type="term" value="P:biotin biosynthetic process"/>
    <property type="evidence" value="ECO:0007669"/>
    <property type="project" value="UniProtKB-UniRule"/>
</dbReference>
<dbReference type="CDD" id="cd06454">
    <property type="entry name" value="KBL_like"/>
    <property type="match status" value="1"/>
</dbReference>
<dbReference type="FunFam" id="3.40.640.10:FF:000095">
    <property type="entry name" value="8-amino-7-oxononanoate synthase"/>
    <property type="match status" value="1"/>
</dbReference>
<dbReference type="FunFam" id="3.90.1150.10:FF:000036">
    <property type="entry name" value="8-amino-7-oxononanoate synthase"/>
    <property type="match status" value="1"/>
</dbReference>
<dbReference type="Gene3D" id="3.90.1150.10">
    <property type="entry name" value="Aspartate Aminotransferase, domain 1"/>
    <property type="match status" value="1"/>
</dbReference>
<dbReference type="Gene3D" id="3.40.640.10">
    <property type="entry name" value="Type I PLP-dependent aspartate aminotransferase-like (Major domain)"/>
    <property type="match status" value="1"/>
</dbReference>
<dbReference type="HAMAP" id="MF_01693">
    <property type="entry name" value="BioF_aminotrans_2"/>
    <property type="match status" value="1"/>
</dbReference>
<dbReference type="InterPro" id="IPR001917">
    <property type="entry name" value="Aminotrans_II_pyridoxalP_BS"/>
</dbReference>
<dbReference type="InterPro" id="IPR004839">
    <property type="entry name" value="Aminotransferase_I/II_large"/>
</dbReference>
<dbReference type="InterPro" id="IPR050087">
    <property type="entry name" value="AON_synthase_class-II"/>
</dbReference>
<dbReference type="InterPro" id="IPR004723">
    <property type="entry name" value="AONS_Archaea/Proteobacteria"/>
</dbReference>
<dbReference type="InterPro" id="IPR022834">
    <property type="entry name" value="AONS_Proteobacteria"/>
</dbReference>
<dbReference type="InterPro" id="IPR015424">
    <property type="entry name" value="PyrdxlP-dep_Trfase"/>
</dbReference>
<dbReference type="InterPro" id="IPR015421">
    <property type="entry name" value="PyrdxlP-dep_Trfase_major"/>
</dbReference>
<dbReference type="InterPro" id="IPR015422">
    <property type="entry name" value="PyrdxlP-dep_Trfase_small"/>
</dbReference>
<dbReference type="NCBIfam" id="TIGR00858">
    <property type="entry name" value="bioF"/>
    <property type="match status" value="1"/>
</dbReference>
<dbReference type="PANTHER" id="PTHR13693:SF100">
    <property type="entry name" value="8-AMINO-7-OXONONANOATE SYNTHASE"/>
    <property type="match status" value="1"/>
</dbReference>
<dbReference type="PANTHER" id="PTHR13693">
    <property type="entry name" value="CLASS II AMINOTRANSFERASE/8-AMINO-7-OXONONANOATE SYNTHASE"/>
    <property type="match status" value="1"/>
</dbReference>
<dbReference type="Pfam" id="PF00155">
    <property type="entry name" value="Aminotran_1_2"/>
    <property type="match status" value="1"/>
</dbReference>
<dbReference type="SUPFAM" id="SSF53383">
    <property type="entry name" value="PLP-dependent transferases"/>
    <property type="match status" value="1"/>
</dbReference>
<dbReference type="PROSITE" id="PS00599">
    <property type="entry name" value="AA_TRANSFER_CLASS_2"/>
    <property type="match status" value="1"/>
</dbReference>
<keyword id="KW-0093">Biotin biosynthesis</keyword>
<keyword id="KW-0663">Pyridoxal phosphate</keyword>
<keyword id="KW-1185">Reference proteome</keyword>
<keyword id="KW-0808">Transferase</keyword>